<name>CPG2_PORG3</name>
<protein>
    <recommendedName>
        <fullName>Gingipain R2</fullName>
        <ecNumber evidence="1">3.4.22.37</ecNumber>
    </recommendedName>
    <alternativeName>
        <fullName>Arg-gingipain</fullName>
    </alternativeName>
</protein>
<comment type="function">
    <text evidence="1 3">Thiol protease. Acts synergistically with RgpA to catalyze the maturation of fimbrial subunits, such as FimA (PubMed:9786913). Its proteolytic activity is a major factor in both periodontal tissue destruction and in evasion of host defense mechanisms (By similarity).</text>
</comment>
<comment type="catalytic activity">
    <reaction evidence="1">
        <text>Hydrolysis of proteins and small molecule substrates, with a preference for Arg in P1.</text>
        <dbReference type="EC" id="3.4.22.37"/>
    </reaction>
</comment>
<comment type="subcellular location">
    <subcellularLocation>
        <location evidence="1">Secreted</location>
    </subcellularLocation>
</comment>
<comment type="similarity">
    <text evidence="4">Belongs to the peptidase C25 family.</text>
</comment>
<accession>B2RKU0</accession>
<keyword id="KW-0106">Calcium</keyword>
<keyword id="KW-0378">Hydrolase</keyword>
<keyword id="KW-0479">Metal-binding</keyword>
<keyword id="KW-0645">Protease</keyword>
<keyword id="KW-0964">Secreted</keyword>
<keyword id="KW-0732">Signal</keyword>
<keyword id="KW-0788">Thiol protease</keyword>
<keyword id="KW-0843">Virulence</keyword>
<keyword id="KW-0865">Zymogen</keyword>
<feature type="signal peptide" evidence="2">
    <location>
        <begin position="1"/>
        <end position="24"/>
    </location>
</feature>
<feature type="propeptide" id="PRO_0000436616" evidence="1">
    <location>
        <begin position="25"/>
        <end position="229"/>
    </location>
</feature>
<feature type="chain" id="PRO_5002780319" description="Gingipain R2">
    <location>
        <begin position="230"/>
        <end position="736"/>
    </location>
</feature>
<feature type="active site" description="Proton donor" evidence="1">
    <location>
        <position position="440"/>
    </location>
</feature>
<feature type="active site" description="Nucleophile" evidence="1">
    <location>
        <position position="473"/>
    </location>
</feature>
<feature type="binding site" evidence="1">
    <location>
        <position position="307"/>
    </location>
    <ligand>
        <name>Ca(2+)</name>
        <dbReference type="ChEBI" id="CHEBI:29108"/>
        <label>1</label>
    </ligand>
</feature>
<feature type="binding site" evidence="1">
    <location>
        <position position="329"/>
    </location>
    <ligand>
        <name>Ca(2+)</name>
        <dbReference type="ChEBI" id="CHEBI:29108"/>
        <label>2</label>
    </ligand>
</feature>
<feature type="binding site" evidence="1">
    <location>
        <position position="332"/>
    </location>
    <ligand>
        <name>Ca(2+)</name>
        <dbReference type="ChEBI" id="CHEBI:29108"/>
        <label>2</label>
    </ligand>
</feature>
<feature type="binding site" evidence="1">
    <location>
        <position position="334"/>
    </location>
    <ligand>
        <name>Ca(2+)</name>
        <dbReference type="ChEBI" id="CHEBI:29108"/>
        <label>2</label>
    </ligand>
</feature>
<feature type="binding site" evidence="1">
    <location>
        <position position="336"/>
    </location>
    <ligand>
        <name>Ca(2+)</name>
        <dbReference type="ChEBI" id="CHEBI:29108"/>
        <label>2</label>
    </ligand>
</feature>
<feature type="binding site" evidence="1">
    <location>
        <position position="390"/>
    </location>
    <ligand>
        <name>Ca(2+)</name>
        <dbReference type="ChEBI" id="CHEBI:29108"/>
        <label>3</label>
    </ligand>
</feature>
<feature type="binding site" evidence="1">
    <location>
        <position position="395"/>
    </location>
    <ligand>
        <name>Ca(2+)</name>
        <dbReference type="ChEBI" id="CHEBI:29108"/>
        <label>3</label>
    </ligand>
</feature>
<feature type="binding site" evidence="1">
    <location>
        <position position="478"/>
    </location>
    <ligand>
        <name>Ca(2+)</name>
        <dbReference type="ChEBI" id="CHEBI:29108"/>
        <label>1</label>
    </ligand>
</feature>
<feature type="binding site" evidence="1">
    <location>
        <position position="487"/>
    </location>
    <ligand>
        <name>Ca(2+)</name>
        <dbReference type="ChEBI" id="CHEBI:29108"/>
        <label>1</label>
    </ligand>
</feature>
<feature type="binding site" evidence="1">
    <location>
        <position position="521"/>
    </location>
    <ligand>
        <name>Ca(2+)</name>
        <dbReference type="ChEBI" id="CHEBI:29108"/>
        <label>3</label>
    </ligand>
</feature>
<feature type="binding site" evidence="1">
    <location>
        <position position="522"/>
    </location>
    <ligand>
        <name>Ca(2+)</name>
        <dbReference type="ChEBI" id="CHEBI:29108"/>
        <label>4</label>
    </ligand>
</feature>
<feature type="binding site" evidence="1">
    <location>
        <position position="525"/>
    </location>
    <ligand>
        <name>Ca(2+)</name>
        <dbReference type="ChEBI" id="CHEBI:29108"/>
        <label>4</label>
    </ligand>
</feature>
<feature type="binding site" evidence="1">
    <location>
        <position position="531"/>
    </location>
    <ligand>
        <name>Ca(2+)</name>
        <dbReference type="ChEBI" id="CHEBI:29108"/>
        <label>4</label>
    </ligand>
</feature>
<feature type="binding site" evidence="1">
    <location>
        <position position="613"/>
    </location>
    <ligand>
        <name>Ca(2+)</name>
        <dbReference type="ChEBI" id="CHEBI:29108"/>
        <label>5</label>
    </ligand>
</feature>
<feature type="binding site" evidence="1">
    <location>
        <position position="639"/>
    </location>
    <ligand>
        <name>Ca(2+)</name>
        <dbReference type="ChEBI" id="CHEBI:29108"/>
        <label>5</label>
    </ligand>
</feature>
<sequence length="736" mass="80930">MKKNFSRIVSIVAFSSLLGGMAFAQPAERGRNPQVRLLSAEQSMSKVQFRMDNLQFTDVQTSKGVAQVPTFTEGVNISEKGTPILPILSRSLAVSETRAMKVEVVSSKFIEKKDVLIAPSKGVISRAENPDQIPYVYGQSYNEDKFFPGEIATLSDPFILRDVRGQVVNFAPLQYNPVTKTLRIYTEIVVAVSETAEAGQNTISLVKNSTFTGFEDIYKSVFMNYEATRYTPVEEKENGRMIVIVAKKYEGDIKDFVDWKNQRGLRTEVKVAEDIASPVTANAIQQFVKQEYEKEGNDLTYVLLVGDHKDIPAKITPGIKSDQVYGQIVGNDHYNEVFIGRFSCESKEDLKTQIDRTIHYERNITTEDKWLGQALCIASAEGGPSADNGESDIQHENVIANLLTQYGYTKIIKCYDPGVTPKNIIDAFNGGISLVNYTGHGSETAWGTSHFGTTHVKQLTNSNQLPFIFDVACVNGDFLFSMPCFAEALMRAQKDGKPTGTVAIIASTINQSWASPMRGQDEMNEILCEKHPNNIKRTFGGVTMNGMFAMVEKYKKDGEKMLDTWTVFGDPSLLVRTLVPTEMQVTAPANISASAQTFEVACDYNGAIATLSDDGDMVGTAIVKDGKAIIKLNESIADETNLTLTVVGYNKVTVIKDVKVEGTSIADVANDKPYTVAVSGKTITVESPAAGLTIFDMNGRRVATAKNRMVFEAQNGVYAVRIATEGKTYTEKVIVK</sequence>
<reference evidence="5 6" key="1">
    <citation type="journal article" date="2008" name="DNA Res.">
        <title>Determination of the genome sequence of Porphyromonas gingivalis strain ATCC 33277 and genomic comparison with strain W83 revealed extensive genome rearrangements in P. gingivalis.</title>
        <authorList>
            <person name="Naito M."/>
            <person name="Hirakawa H."/>
            <person name="Yamashita A."/>
            <person name="Ohara N."/>
            <person name="Shoji M."/>
            <person name="Yukitake H."/>
            <person name="Nakayama K."/>
            <person name="Toh H."/>
            <person name="Yoshimura F."/>
            <person name="Kuhara S."/>
            <person name="Hattori M."/>
            <person name="Hayashi T."/>
            <person name="Nakayama K."/>
        </authorList>
    </citation>
    <scope>NUCLEOTIDE SEQUENCE [LARGE SCALE GENOMIC DNA]</scope>
    <source>
        <strain evidence="6">ATCC 33277 / DSM 20709 / CIP 103683 / JCM 12257 / NCTC 11834 / 2561</strain>
    </source>
</reference>
<reference key="2">
    <citation type="journal article" date="1998" name="J. Biol. Chem.">
        <title>Arg-gingipain acts as a major processing enzyme for various cell surface proteins in Porphyromonas gingivalis.</title>
        <authorList>
            <person name="Kadowaki T."/>
            <person name="Nakayama K."/>
            <person name="Yoshimura F."/>
            <person name="Okamoto K."/>
            <person name="Abe N."/>
            <person name="Yamamoto K."/>
        </authorList>
    </citation>
    <scope>FUNCTION</scope>
    <source>
        <strain>ATCC 33277 / DSM 20709 / CIP 103683 / JCM 12257 / NCTC 11834 / 2561</strain>
    </source>
</reference>
<organism>
    <name type="scientific">Porphyromonas gingivalis (strain ATCC 33277 / DSM 20709 / CIP 103683 / JCM 12257 / NCTC 11834 / 2561)</name>
    <dbReference type="NCBI Taxonomy" id="431947"/>
    <lineage>
        <taxon>Bacteria</taxon>
        <taxon>Pseudomonadati</taxon>
        <taxon>Bacteroidota</taxon>
        <taxon>Bacteroidia</taxon>
        <taxon>Bacteroidales</taxon>
        <taxon>Porphyromonadaceae</taxon>
        <taxon>Porphyromonas</taxon>
    </lineage>
</organism>
<gene>
    <name evidence="5" type="primary">rgpB</name>
    <name evidence="5" type="ordered locus">PGN_1466</name>
</gene>
<proteinExistence type="inferred from homology"/>
<evidence type="ECO:0000250" key="1">
    <source>
        <dbReference type="UniProtKB" id="P95493"/>
    </source>
</evidence>
<evidence type="ECO:0000255" key="2"/>
<evidence type="ECO:0000269" key="3">
    <source>
    </source>
</evidence>
<evidence type="ECO:0000305" key="4"/>
<evidence type="ECO:0000312" key="5">
    <source>
        <dbReference type="EMBL" id="BAG33985.1"/>
    </source>
</evidence>
<evidence type="ECO:0000312" key="6">
    <source>
        <dbReference type="Proteomes" id="UP000008842"/>
    </source>
</evidence>
<dbReference type="EC" id="3.4.22.37" evidence="1"/>
<dbReference type="EMBL" id="AP009380">
    <property type="protein sequence ID" value="BAG33985.1"/>
    <property type="molecule type" value="Genomic_DNA"/>
</dbReference>
<dbReference type="RefSeq" id="WP_012458292.1">
    <property type="nucleotide sequence ID" value="NC_010729.1"/>
</dbReference>
<dbReference type="SMR" id="B2RKU0"/>
<dbReference type="MEROPS" id="C25.001"/>
<dbReference type="GeneID" id="29256649"/>
<dbReference type="KEGG" id="pgn:PGN_1466"/>
<dbReference type="eggNOG" id="COG2957">
    <property type="taxonomic scope" value="Bacteria"/>
</dbReference>
<dbReference type="HOGENOM" id="CLU_376783_0_0_10"/>
<dbReference type="OrthoDB" id="5294031at2"/>
<dbReference type="BioCyc" id="PGIN431947:G1G2V-1668-MONOMER"/>
<dbReference type="BRENDA" id="3.4.22.37">
    <property type="organism ID" value="756"/>
</dbReference>
<dbReference type="PHI-base" id="PHI:11115"/>
<dbReference type="PHI-base" id="PHI:7888"/>
<dbReference type="Proteomes" id="UP000008842">
    <property type="component" value="Chromosome"/>
</dbReference>
<dbReference type="GO" id="GO:0005576">
    <property type="term" value="C:extracellular region"/>
    <property type="evidence" value="ECO:0007669"/>
    <property type="project" value="UniProtKB-SubCell"/>
</dbReference>
<dbReference type="GO" id="GO:0004197">
    <property type="term" value="F:cysteine-type endopeptidase activity"/>
    <property type="evidence" value="ECO:0007669"/>
    <property type="project" value="InterPro"/>
</dbReference>
<dbReference type="GO" id="GO:0046872">
    <property type="term" value="F:metal ion binding"/>
    <property type="evidence" value="ECO:0007669"/>
    <property type="project" value="UniProtKB-KW"/>
</dbReference>
<dbReference type="GO" id="GO:0006508">
    <property type="term" value="P:proteolysis"/>
    <property type="evidence" value="ECO:0007669"/>
    <property type="project" value="UniProtKB-KW"/>
</dbReference>
<dbReference type="CDD" id="cd10913">
    <property type="entry name" value="Peptidase_C25_N_gingipain"/>
    <property type="match status" value="1"/>
</dbReference>
<dbReference type="FunFam" id="2.60.40.10:FF:002699">
    <property type="entry name" value="Gingipain R2"/>
    <property type="match status" value="1"/>
</dbReference>
<dbReference type="FunFam" id="3.40.50.1460:FF:000031">
    <property type="entry name" value="Gingipain R2"/>
    <property type="match status" value="1"/>
</dbReference>
<dbReference type="Gene3D" id="2.60.40.3800">
    <property type="match status" value="1"/>
</dbReference>
<dbReference type="Gene3D" id="3.40.50.1460">
    <property type="match status" value="1"/>
</dbReference>
<dbReference type="Gene3D" id="3.40.50.10390">
    <property type="entry name" value="Gingipain r, domain 1"/>
    <property type="match status" value="1"/>
</dbReference>
<dbReference type="Gene3D" id="2.60.40.10">
    <property type="entry name" value="Immunoglobulins"/>
    <property type="match status" value="1"/>
</dbReference>
<dbReference type="InterPro" id="IPR029030">
    <property type="entry name" value="Caspase-like_dom_sf"/>
</dbReference>
<dbReference type="InterPro" id="IPR001769">
    <property type="entry name" value="Gingipain"/>
</dbReference>
<dbReference type="InterPro" id="IPR039392">
    <property type="entry name" value="Gingipain_N"/>
</dbReference>
<dbReference type="InterPro" id="IPR029031">
    <property type="entry name" value="Gingipain_N_sf"/>
</dbReference>
<dbReference type="InterPro" id="IPR038490">
    <property type="entry name" value="Gingipain_propep_sf"/>
</dbReference>
<dbReference type="InterPro" id="IPR013783">
    <property type="entry name" value="Ig-like_fold"/>
</dbReference>
<dbReference type="InterPro" id="IPR014756">
    <property type="entry name" value="Ig_E-set"/>
</dbReference>
<dbReference type="InterPro" id="IPR041333">
    <property type="entry name" value="M60_C"/>
</dbReference>
<dbReference type="InterPro" id="IPR005536">
    <property type="entry name" value="Peptidase_C25_Ig-like_domain"/>
</dbReference>
<dbReference type="InterPro" id="IPR012600">
    <property type="entry name" value="Propeptide_C25"/>
</dbReference>
<dbReference type="InterPro" id="IPR026444">
    <property type="entry name" value="Secre_tail"/>
</dbReference>
<dbReference type="NCBIfam" id="TIGR04183">
    <property type="entry name" value="Por_Secre_tail"/>
    <property type="match status" value="1"/>
</dbReference>
<dbReference type="Pfam" id="PF01364">
    <property type="entry name" value="Peptidase_C25"/>
    <property type="match status" value="1"/>
</dbReference>
<dbReference type="Pfam" id="PF03785">
    <property type="entry name" value="Peptidase_C25_C"/>
    <property type="match status" value="1"/>
</dbReference>
<dbReference type="Pfam" id="PF18630">
    <property type="entry name" value="Peptidase_M60_C"/>
    <property type="match status" value="1"/>
</dbReference>
<dbReference type="Pfam" id="PF08126">
    <property type="entry name" value="Propeptide_C25"/>
    <property type="match status" value="1"/>
</dbReference>
<dbReference type="SUPFAM" id="SSF52129">
    <property type="entry name" value="Caspase-like"/>
    <property type="match status" value="1"/>
</dbReference>
<dbReference type="SUPFAM" id="SSF81296">
    <property type="entry name" value="E set domains"/>
    <property type="match status" value="1"/>
</dbReference>